<accession>A7X4T8</accession>
<evidence type="ECO:0000250" key="1"/>
<evidence type="ECO:0000255" key="2">
    <source>
        <dbReference type="PROSITE-ProRule" id="PRU01005"/>
    </source>
</evidence>
<evidence type="ECO:0000305" key="3"/>
<sequence length="116" mass="12784">ANPSYAVVGHYTQIVWYKSDRIGCAAAYCPSSVYNYFYVCQYCPAGNFAGRTATPYKSGPPCGDCPSACDNGLCTNPCRVEDEFINCKDMAESRDCQDNYMMTNCAAFCSCHNEII</sequence>
<feature type="chain" id="PRO_0000380642" description="Cysteine-rich venom protein Cau1">
    <location>
        <begin position="1" status="less than"/>
        <end position="116"/>
    </location>
</feature>
<feature type="domain" description="SCP">
    <location>
        <begin position="4"/>
        <end position="42"/>
    </location>
</feature>
<feature type="domain" description="ShKT" evidence="2">
    <location>
        <begin position="78"/>
        <end position="111"/>
    </location>
</feature>
<feature type="disulfide bond" evidence="2">
    <location>
        <begin position="24"/>
        <end position="40"/>
    </location>
</feature>
<feature type="disulfide bond" evidence="2">
    <location>
        <begin position="62"/>
        <end position="69"/>
    </location>
</feature>
<feature type="disulfide bond" evidence="2">
    <location>
        <begin position="65"/>
        <end position="74"/>
    </location>
</feature>
<feature type="disulfide bond" evidence="2">
    <location>
        <begin position="87"/>
        <end position="105"/>
    </location>
</feature>
<feature type="disulfide bond" evidence="2">
    <location>
        <begin position="96"/>
        <end position="109"/>
    </location>
</feature>
<feature type="non-terminal residue">
    <location>
        <position position="1"/>
    </location>
</feature>
<comment type="function">
    <text evidence="1">Blocks contraction of smooth muscle elicited by high potassium-induced depolarization, but does not block caffeine-stimulated contraction. May target voltage-gated calcium channels on smooth muscle (By similarity).</text>
</comment>
<comment type="subcellular location">
    <subcellularLocation>
        <location evidence="1">Secreted</location>
    </subcellularLocation>
</comment>
<comment type="tissue specificity">
    <text>Expressed by the venom gland.</text>
</comment>
<comment type="similarity">
    <text evidence="3">Belongs to the CRISP family.</text>
</comment>
<name>CRVP_CAURH</name>
<proteinExistence type="evidence at transcript level"/>
<reference key="1">
    <citation type="journal article" date="2008" name="Mol. Cell. Proteomics">
        <title>Evolution of an arsenal: structural and functional diversification of the venom system in the advanced snakes (Caenophidia).</title>
        <authorList>
            <person name="Fry B.G."/>
            <person name="Scheib H."/>
            <person name="van der Weerd L."/>
            <person name="Young B."/>
            <person name="McNaughtan J."/>
            <person name="Ramjan S.F.R."/>
            <person name="Vidal N."/>
            <person name="Poelmann R.E."/>
            <person name="Norman J.A."/>
        </authorList>
    </citation>
    <scope>NUCLEOTIDE SEQUENCE [LARGE SCALE MRNA]</scope>
    <source>
        <tissue>Venom gland</tissue>
    </source>
</reference>
<dbReference type="EMBL" id="EU029755">
    <property type="protein sequence ID" value="ABU68555.1"/>
    <property type="molecule type" value="mRNA"/>
</dbReference>
<dbReference type="SMR" id="A7X4T8"/>
<dbReference type="GO" id="GO:0005576">
    <property type="term" value="C:extracellular region"/>
    <property type="evidence" value="ECO:0007669"/>
    <property type="project" value="UniProtKB-SubCell"/>
</dbReference>
<dbReference type="GO" id="GO:0005246">
    <property type="term" value="F:calcium channel regulator activity"/>
    <property type="evidence" value="ECO:0007669"/>
    <property type="project" value="UniProtKB-KW"/>
</dbReference>
<dbReference type="GO" id="GO:0090729">
    <property type="term" value="F:toxin activity"/>
    <property type="evidence" value="ECO:0007669"/>
    <property type="project" value="UniProtKB-KW"/>
</dbReference>
<dbReference type="Gene3D" id="3.40.33.10">
    <property type="entry name" value="CAP"/>
    <property type="match status" value="1"/>
</dbReference>
<dbReference type="Gene3D" id="1.10.10.740">
    <property type="entry name" value="Crisp domain"/>
    <property type="match status" value="1"/>
</dbReference>
<dbReference type="InterPro" id="IPR018244">
    <property type="entry name" value="Allrgn_V5/Tpx1_CS"/>
</dbReference>
<dbReference type="InterPro" id="IPR014044">
    <property type="entry name" value="CAP_dom"/>
</dbReference>
<dbReference type="InterPro" id="IPR035940">
    <property type="entry name" value="CAP_sf"/>
</dbReference>
<dbReference type="InterPro" id="IPR042076">
    <property type="entry name" value="Crisp-like_dom"/>
</dbReference>
<dbReference type="InterPro" id="IPR001283">
    <property type="entry name" value="CRISP-related"/>
</dbReference>
<dbReference type="InterPro" id="IPR013871">
    <property type="entry name" value="Cysteine_rich_secretory"/>
</dbReference>
<dbReference type="InterPro" id="IPR003582">
    <property type="entry name" value="ShKT_dom"/>
</dbReference>
<dbReference type="PANTHER" id="PTHR10334">
    <property type="entry name" value="CYSTEINE-RICH SECRETORY PROTEIN-RELATED"/>
    <property type="match status" value="1"/>
</dbReference>
<dbReference type="Pfam" id="PF00188">
    <property type="entry name" value="CAP"/>
    <property type="match status" value="1"/>
</dbReference>
<dbReference type="Pfam" id="PF08562">
    <property type="entry name" value="Crisp"/>
    <property type="match status" value="1"/>
</dbReference>
<dbReference type="PRINTS" id="PR00837">
    <property type="entry name" value="V5TPXLIKE"/>
</dbReference>
<dbReference type="SUPFAM" id="SSF57546">
    <property type="entry name" value="Crisp domain-like"/>
    <property type="match status" value="1"/>
</dbReference>
<dbReference type="SUPFAM" id="SSF55797">
    <property type="entry name" value="PR-1-like"/>
    <property type="match status" value="1"/>
</dbReference>
<dbReference type="PROSITE" id="PS01009">
    <property type="entry name" value="CRISP_1"/>
    <property type="match status" value="1"/>
</dbReference>
<dbReference type="PROSITE" id="PS01010">
    <property type="entry name" value="CRISP_2"/>
    <property type="match status" value="1"/>
</dbReference>
<dbReference type="PROSITE" id="PS51670">
    <property type="entry name" value="SHKT"/>
    <property type="match status" value="1"/>
</dbReference>
<protein>
    <recommendedName>
        <fullName>Cysteine-rich venom protein Cau1</fullName>
        <shortName>CRVP</shortName>
    </recommendedName>
    <alternativeName>
        <fullName>Cysteine-rich secretory protein Cau1</fullName>
        <shortName>CRISP-Cau1</shortName>
    </alternativeName>
</protein>
<keyword id="KW-0108">Calcium channel impairing toxin</keyword>
<keyword id="KW-1015">Disulfide bond</keyword>
<keyword id="KW-0872">Ion channel impairing toxin</keyword>
<keyword id="KW-0528">Neurotoxin</keyword>
<keyword id="KW-0964">Secreted</keyword>
<keyword id="KW-0800">Toxin</keyword>
<organism>
    <name type="scientific">Causus rhombeatus</name>
    <name type="common">Rhombic night adder</name>
    <dbReference type="NCBI Taxonomy" id="44735"/>
    <lineage>
        <taxon>Eukaryota</taxon>
        <taxon>Metazoa</taxon>
        <taxon>Chordata</taxon>
        <taxon>Craniata</taxon>
        <taxon>Vertebrata</taxon>
        <taxon>Euteleostomi</taxon>
        <taxon>Lepidosauria</taxon>
        <taxon>Squamata</taxon>
        <taxon>Bifurcata</taxon>
        <taxon>Unidentata</taxon>
        <taxon>Episquamata</taxon>
        <taxon>Toxicofera</taxon>
        <taxon>Serpentes</taxon>
        <taxon>Colubroidea</taxon>
        <taxon>Viperidae</taxon>
        <taxon>Viperinae</taxon>
        <taxon>Causus</taxon>
    </lineage>
</organism>